<reference key="1">
    <citation type="journal article" date="2002" name="J. Bacteriol.">
        <title>Genome sequence and analysis of the oral bacterium Fusobacterium nucleatum strain ATCC 25586.</title>
        <authorList>
            <person name="Kapatral V."/>
            <person name="Anderson I."/>
            <person name="Ivanova N."/>
            <person name="Reznik G."/>
            <person name="Los T."/>
            <person name="Lykidis A."/>
            <person name="Bhattacharyya A."/>
            <person name="Bartman A."/>
            <person name="Gardner W."/>
            <person name="Grechkin G."/>
            <person name="Zhu L."/>
            <person name="Vasieva O."/>
            <person name="Chu L."/>
            <person name="Kogan Y."/>
            <person name="Chaga O."/>
            <person name="Goltsman E."/>
            <person name="Bernal A."/>
            <person name="Larsen N."/>
            <person name="D'Souza M."/>
            <person name="Walunas T."/>
            <person name="Pusch G."/>
            <person name="Haselkorn R."/>
            <person name="Fonstein M."/>
            <person name="Kyrpides N.C."/>
            <person name="Overbeek R."/>
        </authorList>
    </citation>
    <scope>NUCLEOTIDE SEQUENCE [LARGE SCALE GENOMIC DNA]</scope>
    <source>
        <strain>ATCC 25586 / DSM 15643 / BCRC 10681 / CIP 101130 / JCM 8532 / KCTC 2640 / LMG 13131 / VPI 4355</strain>
    </source>
</reference>
<organism>
    <name type="scientific">Fusobacterium nucleatum subsp. nucleatum (strain ATCC 25586 / DSM 15643 / BCRC 10681 / CIP 101130 / JCM 8532 / KCTC 2640 / LMG 13131 / VPI 4355)</name>
    <dbReference type="NCBI Taxonomy" id="190304"/>
    <lineage>
        <taxon>Bacteria</taxon>
        <taxon>Fusobacteriati</taxon>
        <taxon>Fusobacteriota</taxon>
        <taxon>Fusobacteriia</taxon>
        <taxon>Fusobacteriales</taxon>
        <taxon>Fusobacteriaceae</taxon>
        <taxon>Fusobacterium</taxon>
    </lineage>
</organism>
<dbReference type="EC" id="1.1.1.27" evidence="1"/>
<dbReference type="EMBL" id="AE009951">
    <property type="protein sequence ID" value="AAL95365.1"/>
    <property type="molecule type" value="Genomic_DNA"/>
</dbReference>
<dbReference type="RefSeq" id="NP_604066.1">
    <property type="nucleotide sequence ID" value="NC_003454.1"/>
</dbReference>
<dbReference type="RefSeq" id="WP_011016957.1">
    <property type="nucleotide sequence ID" value="NZ_OZ209243.1"/>
</dbReference>
<dbReference type="SMR" id="Q8RED8"/>
<dbReference type="FunCoup" id="Q8RED8">
    <property type="interactions" value="155"/>
</dbReference>
<dbReference type="STRING" id="190304.FN1169"/>
<dbReference type="PaxDb" id="190304-FN1169"/>
<dbReference type="EnsemblBacteria" id="AAL95365">
    <property type="protein sequence ID" value="AAL95365"/>
    <property type="gene ID" value="FN1169"/>
</dbReference>
<dbReference type="KEGG" id="fnu:FN1169"/>
<dbReference type="PATRIC" id="fig|190304.8.peg.1734"/>
<dbReference type="eggNOG" id="COG0039">
    <property type="taxonomic scope" value="Bacteria"/>
</dbReference>
<dbReference type="HOGENOM" id="CLU_045401_1_2_0"/>
<dbReference type="InParanoid" id="Q8RED8"/>
<dbReference type="BioCyc" id="FNUC190304:G1FZS-1748-MONOMER"/>
<dbReference type="UniPathway" id="UPA00554">
    <property type="reaction ID" value="UER00611"/>
</dbReference>
<dbReference type="Proteomes" id="UP000002521">
    <property type="component" value="Chromosome"/>
</dbReference>
<dbReference type="GO" id="GO:0005737">
    <property type="term" value="C:cytoplasm"/>
    <property type="evidence" value="ECO:0007669"/>
    <property type="project" value="UniProtKB-SubCell"/>
</dbReference>
<dbReference type="GO" id="GO:0004459">
    <property type="term" value="F:L-lactate dehydrogenase activity"/>
    <property type="evidence" value="ECO:0000318"/>
    <property type="project" value="GO_Central"/>
</dbReference>
<dbReference type="GO" id="GO:0006096">
    <property type="term" value="P:glycolytic process"/>
    <property type="evidence" value="ECO:0007669"/>
    <property type="project" value="UniProtKB-UniRule"/>
</dbReference>
<dbReference type="GO" id="GO:0006089">
    <property type="term" value="P:lactate metabolic process"/>
    <property type="evidence" value="ECO:0000318"/>
    <property type="project" value="GO_Central"/>
</dbReference>
<dbReference type="GO" id="GO:0006090">
    <property type="term" value="P:pyruvate metabolic process"/>
    <property type="evidence" value="ECO:0000318"/>
    <property type="project" value="GO_Central"/>
</dbReference>
<dbReference type="CDD" id="cd05291">
    <property type="entry name" value="HicDH_like"/>
    <property type="match status" value="1"/>
</dbReference>
<dbReference type="Gene3D" id="3.90.110.10">
    <property type="entry name" value="Lactate dehydrogenase/glycoside hydrolase, family 4, C-terminal"/>
    <property type="match status" value="1"/>
</dbReference>
<dbReference type="Gene3D" id="3.40.50.720">
    <property type="entry name" value="NAD(P)-binding Rossmann-like Domain"/>
    <property type="match status" value="1"/>
</dbReference>
<dbReference type="HAMAP" id="MF_00488">
    <property type="entry name" value="Lactate_dehydrog"/>
    <property type="match status" value="1"/>
</dbReference>
<dbReference type="InterPro" id="IPR001557">
    <property type="entry name" value="L-lactate/malate_DH"/>
</dbReference>
<dbReference type="InterPro" id="IPR011304">
    <property type="entry name" value="L-lactate_DH"/>
</dbReference>
<dbReference type="InterPro" id="IPR018177">
    <property type="entry name" value="L-lactate_DH_AS"/>
</dbReference>
<dbReference type="InterPro" id="IPR022383">
    <property type="entry name" value="Lactate/malate_DH_C"/>
</dbReference>
<dbReference type="InterPro" id="IPR001236">
    <property type="entry name" value="Lactate/malate_DH_N"/>
</dbReference>
<dbReference type="InterPro" id="IPR015955">
    <property type="entry name" value="Lactate_DH/Glyco_Ohase_4_C"/>
</dbReference>
<dbReference type="InterPro" id="IPR036291">
    <property type="entry name" value="NAD(P)-bd_dom_sf"/>
</dbReference>
<dbReference type="NCBIfam" id="TIGR01771">
    <property type="entry name" value="L-LDH-NAD"/>
    <property type="match status" value="1"/>
</dbReference>
<dbReference type="PANTHER" id="PTHR43128">
    <property type="entry name" value="L-2-HYDROXYCARBOXYLATE DEHYDROGENASE (NAD(P)(+))"/>
    <property type="match status" value="1"/>
</dbReference>
<dbReference type="PANTHER" id="PTHR43128:SF31">
    <property type="entry name" value="L-LACTATE DEHYDROGENASE"/>
    <property type="match status" value="1"/>
</dbReference>
<dbReference type="Pfam" id="PF02866">
    <property type="entry name" value="Ldh_1_C"/>
    <property type="match status" value="1"/>
</dbReference>
<dbReference type="Pfam" id="PF00056">
    <property type="entry name" value="Ldh_1_N"/>
    <property type="match status" value="1"/>
</dbReference>
<dbReference type="PIRSF" id="PIRSF000102">
    <property type="entry name" value="Lac_mal_DH"/>
    <property type="match status" value="1"/>
</dbReference>
<dbReference type="PRINTS" id="PR00086">
    <property type="entry name" value="LLDHDRGNASE"/>
</dbReference>
<dbReference type="SUPFAM" id="SSF56327">
    <property type="entry name" value="LDH C-terminal domain-like"/>
    <property type="match status" value="1"/>
</dbReference>
<dbReference type="SUPFAM" id="SSF51735">
    <property type="entry name" value="NAD(P)-binding Rossmann-fold domains"/>
    <property type="match status" value="1"/>
</dbReference>
<dbReference type="PROSITE" id="PS00064">
    <property type="entry name" value="L_LDH"/>
    <property type="match status" value="1"/>
</dbReference>
<sequence>MLQTRKVGIVGIGHVGSHCALSMLLQGVCDEMVLMDIIPEKAKAHAIDCMDTISFLPHRAIIRDGGIQELSKMDVIVISVGSLTKNEQRLEELKGSLEAIKSFVPDVVKAGFNGIFVTITNPVDIVTYFVRELSGFPKNRVIGTGTGLDSARLKRILSEVTNIDSQVIQAYMLGEHGDTQIANFSSATIQGVPFLDYMKTHPEQFKGVELSVLEKQVVRTAWDIISGKNCTEFGIGCTCSNLVKAIFHNERRVLPCSAYLNGEYGHSGFYTGVPAIIGSNGVEEILELPLDERERKGFEDACAVMKKYIEVGKSYKIV</sequence>
<protein>
    <recommendedName>
        <fullName evidence="1">L-lactate dehydrogenase</fullName>
        <shortName evidence="1">L-LDH</shortName>
        <ecNumber evidence="1">1.1.1.27</ecNumber>
    </recommendedName>
</protein>
<proteinExistence type="inferred from homology"/>
<gene>
    <name evidence="1" type="primary">ldh</name>
    <name type="ordered locus">FN1169</name>
</gene>
<keyword id="KW-0963">Cytoplasm</keyword>
<keyword id="KW-0520">NAD</keyword>
<keyword id="KW-0560">Oxidoreductase</keyword>
<keyword id="KW-1185">Reference proteome</keyword>
<evidence type="ECO:0000255" key="1">
    <source>
        <dbReference type="HAMAP-Rule" id="MF_00488"/>
    </source>
</evidence>
<comment type="function">
    <text evidence="1">Catalyzes the conversion of lactate to pyruvate.</text>
</comment>
<comment type="catalytic activity">
    <reaction evidence="1">
        <text>(S)-lactate + NAD(+) = pyruvate + NADH + H(+)</text>
        <dbReference type="Rhea" id="RHEA:23444"/>
        <dbReference type="ChEBI" id="CHEBI:15361"/>
        <dbReference type="ChEBI" id="CHEBI:15378"/>
        <dbReference type="ChEBI" id="CHEBI:16651"/>
        <dbReference type="ChEBI" id="CHEBI:57540"/>
        <dbReference type="ChEBI" id="CHEBI:57945"/>
        <dbReference type="EC" id="1.1.1.27"/>
    </reaction>
</comment>
<comment type="pathway">
    <text evidence="1">Fermentation; pyruvate fermentation to lactate; (S)-lactate from pyruvate: step 1/1.</text>
</comment>
<comment type="subunit">
    <text evidence="1">Homotetramer.</text>
</comment>
<comment type="subcellular location">
    <subcellularLocation>
        <location evidence="1">Cytoplasm</location>
    </subcellularLocation>
</comment>
<comment type="similarity">
    <text evidence="1">Belongs to the LDH/MDH superfamily. LDH family.</text>
</comment>
<feature type="chain" id="PRO_0000168345" description="L-lactate dehydrogenase">
    <location>
        <begin position="1"/>
        <end position="318"/>
    </location>
</feature>
<feature type="active site" description="Proton acceptor" evidence="1">
    <location>
        <position position="176"/>
    </location>
</feature>
<feature type="binding site" evidence="1">
    <location>
        <position position="15"/>
    </location>
    <ligand>
        <name>NAD(+)</name>
        <dbReference type="ChEBI" id="CHEBI:57540"/>
    </ligand>
</feature>
<feature type="binding site" evidence="1">
    <location>
        <position position="36"/>
    </location>
    <ligand>
        <name>NAD(+)</name>
        <dbReference type="ChEBI" id="CHEBI:57540"/>
    </ligand>
</feature>
<feature type="binding site" evidence="1">
    <location>
        <position position="41"/>
    </location>
    <ligand>
        <name>NAD(+)</name>
        <dbReference type="ChEBI" id="CHEBI:57540"/>
    </ligand>
</feature>
<feature type="binding site" evidence="1">
    <location>
        <position position="89"/>
    </location>
    <ligand>
        <name>substrate</name>
    </ligand>
</feature>
<feature type="binding site" evidence="1">
    <location>
        <position position="102"/>
    </location>
    <ligand>
        <name>NAD(+)</name>
        <dbReference type="ChEBI" id="CHEBI:57540"/>
    </ligand>
</feature>
<feature type="binding site" evidence="1">
    <location>
        <begin position="119"/>
        <end position="121"/>
    </location>
    <ligand>
        <name>NAD(+)</name>
        <dbReference type="ChEBI" id="CHEBI:57540"/>
    </ligand>
</feature>
<feature type="binding site" evidence="1">
    <location>
        <begin position="121"/>
        <end position="124"/>
    </location>
    <ligand>
        <name>substrate</name>
    </ligand>
</feature>
<feature type="binding site" evidence="1">
    <location>
        <position position="144"/>
    </location>
    <ligand>
        <name>NAD(+)</name>
        <dbReference type="ChEBI" id="CHEBI:57540"/>
    </ligand>
</feature>
<feature type="binding site" evidence="1">
    <location>
        <begin position="149"/>
        <end position="152"/>
    </location>
    <ligand>
        <name>substrate</name>
    </ligand>
</feature>
<feature type="binding site" evidence="1">
    <location>
        <position position="231"/>
    </location>
    <ligand>
        <name>substrate</name>
    </ligand>
</feature>
<accession>Q8RED8</accession>
<name>LDH_FUSNN</name>